<dbReference type="EC" id="1.17.4.1"/>
<dbReference type="EMBL" id="AE001439">
    <property type="protein sequence ID" value="AAD06604.1"/>
    <property type="molecule type" value="Genomic_DNA"/>
</dbReference>
<dbReference type="PIR" id="C71858">
    <property type="entry name" value="C71858"/>
</dbReference>
<dbReference type="RefSeq" id="WP_000453998.1">
    <property type="nucleotide sequence ID" value="NZ_CP011330.1"/>
</dbReference>
<dbReference type="SMR" id="Q9ZKC3"/>
<dbReference type="KEGG" id="hpj:jhp_1016"/>
<dbReference type="PATRIC" id="fig|85963.30.peg.1574"/>
<dbReference type="eggNOG" id="COG0208">
    <property type="taxonomic scope" value="Bacteria"/>
</dbReference>
<dbReference type="Proteomes" id="UP000000804">
    <property type="component" value="Chromosome"/>
</dbReference>
<dbReference type="GO" id="GO:0046872">
    <property type="term" value="F:metal ion binding"/>
    <property type="evidence" value="ECO:0007669"/>
    <property type="project" value="UniProtKB-KW"/>
</dbReference>
<dbReference type="GO" id="GO:0004748">
    <property type="term" value="F:ribonucleoside-diphosphate reductase activity, thioredoxin disulfide as acceptor"/>
    <property type="evidence" value="ECO:0007669"/>
    <property type="project" value="UniProtKB-EC"/>
</dbReference>
<dbReference type="GO" id="GO:0009263">
    <property type="term" value="P:deoxyribonucleotide biosynthetic process"/>
    <property type="evidence" value="ECO:0007669"/>
    <property type="project" value="UniProtKB-KW"/>
</dbReference>
<dbReference type="CDD" id="cd01049">
    <property type="entry name" value="RNRR2"/>
    <property type="match status" value="1"/>
</dbReference>
<dbReference type="Gene3D" id="1.10.620.20">
    <property type="entry name" value="Ribonucleotide Reductase, subunit A"/>
    <property type="match status" value="1"/>
</dbReference>
<dbReference type="InterPro" id="IPR009078">
    <property type="entry name" value="Ferritin-like_SF"/>
</dbReference>
<dbReference type="InterPro" id="IPR012348">
    <property type="entry name" value="RNR-like"/>
</dbReference>
<dbReference type="InterPro" id="IPR033909">
    <property type="entry name" value="RNR_small"/>
</dbReference>
<dbReference type="InterPro" id="IPR030475">
    <property type="entry name" value="RNR_small_AS"/>
</dbReference>
<dbReference type="InterPro" id="IPR000358">
    <property type="entry name" value="RNR_small_fam"/>
</dbReference>
<dbReference type="NCBIfam" id="NF007184">
    <property type="entry name" value="PRK09614.1-3"/>
    <property type="match status" value="1"/>
</dbReference>
<dbReference type="PANTHER" id="PTHR23409">
    <property type="entry name" value="RIBONUCLEOSIDE-DIPHOSPHATE REDUCTASE SMALL CHAIN"/>
    <property type="match status" value="1"/>
</dbReference>
<dbReference type="PANTHER" id="PTHR23409:SF18">
    <property type="entry name" value="RIBONUCLEOSIDE-DIPHOSPHATE REDUCTASE SUBUNIT M2"/>
    <property type="match status" value="1"/>
</dbReference>
<dbReference type="Pfam" id="PF00268">
    <property type="entry name" value="Ribonuc_red_sm"/>
    <property type="match status" value="1"/>
</dbReference>
<dbReference type="PIRSF" id="PIRSF000355">
    <property type="entry name" value="NrdB"/>
    <property type="match status" value="1"/>
</dbReference>
<dbReference type="SUPFAM" id="SSF47240">
    <property type="entry name" value="Ferritin-like"/>
    <property type="match status" value="1"/>
</dbReference>
<dbReference type="PROSITE" id="PS00368">
    <property type="entry name" value="RIBORED_SMALL"/>
    <property type="match status" value="1"/>
</dbReference>
<sequence>MEVSRKKIYNPNSTESVNERKIFGGNPTSMFDLNKIKYQWADHLWKTMLANTWFAEEVSMNDDKRDYLKLSAEEKIGYDRALAQLIFMDSLQANNLIDNINPFITSPEINLCLVRQAYEEALHSHAYAVMVESISANTEEIYDMWRNDMQLKSKNDYIAQVYMELAKNPTEENILKALFANQILEGIYFYSGFSYFYTLARSGKMLGSAQMIRFIQRDEVTHLILFQNMINALRNERADLFTPQLINEVIEMFKKAVEIEASWGDYITQGKILGLTSSLIEQYIQFLADSRLSKVGIAKVYGVQHPIKWVESFSSFNEQRSNFFEARVSNYAKGSVSFDDF</sequence>
<keyword id="KW-0215">Deoxyribonucleotide synthesis</keyword>
<keyword id="KW-0408">Iron</keyword>
<keyword id="KW-0479">Metal-binding</keyword>
<keyword id="KW-0560">Oxidoreductase</keyword>
<feature type="chain" id="PRO_0000190481" description="Ribonucleoside-diphosphate reductase subunit beta">
    <location>
        <begin position="1"/>
        <end position="341"/>
    </location>
</feature>
<feature type="active site" evidence="2">
    <location>
        <position position="127"/>
    </location>
</feature>
<feature type="binding site" evidence="2">
    <location>
        <position position="89"/>
    </location>
    <ligand>
        <name>Fe cation</name>
        <dbReference type="ChEBI" id="CHEBI:24875"/>
        <label>1</label>
    </ligand>
</feature>
<feature type="binding site" evidence="2">
    <location>
        <position position="120"/>
    </location>
    <ligand>
        <name>Fe cation</name>
        <dbReference type="ChEBI" id="CHEBI:24875"/>
        <label>1</label>
    </ligand>
</feature>
<feature type="binding site" evidence="1">
    <location>
        <position position="120"/>
    </location>
    <ligand>
        <name>Fe cation</name>
        <dbReference type="ChEBI" id="CHEBI:24875"/>
        <label>2</label>
    </ligand>
</feature>
<feature type="binding site" evidence="2">
    <location>
        <position position="123"/>
    </location>
    <ligand>
        <name>Fe cation</name>
        <dbReference type="ChEBI" id="CHEBI:24875"/>
        <label>1</label>
    </ligand>
</feature>
<feature type="binding site" evidence="1">
    <location>
        <position position="185"/>
    </location>
    <ligand>
        <name>Fe cation</name>
        <dbReference type="ChEBI" id="CHEBI:24875"/>
        <label>2</label>
    </ligand>
</feature>
<feature type="binding site" evidence="1">
    <location>
        <position position="219"/>
    </location>
    <ligand>
        <name>Fe cation</name>
        <dbReference type="ChEBI" id="CHEBI:24875"/>
        <label>2</label>
    </ligand>
</feature>
<feature type="binding site" evidence="1">
    <location>
        <position position="222"/>
    </location>
    <ligand>
        <name>Fe cation</name>
        <dbReference type="ChEBI" id="CHEBI:24875"/>
        <label>2</label>
    </ligand>
</feature>
<reference key="1">
    <citation type="journal article" date="1999" name="Nature">
        <title>Genomic sequence comparison of two unrelated isolates of the human gastric pathogen Helicobacter pylori.</title>
        <authorList>
            <person name="Alm R.A."/>
            <person name="Ling L.-S.L."/>
            <person name="Moir D.T."/>
            <person name="King B.L."/>
            <person name="Brown E.D."/>
            <person name="Doig P.C."/>
            <person name="Smith D.R."/>
            <person name="Noonan B."/>
            <person name="Guild B.C."/>
            <person name="deJonge B.L."/>
            <person name="Carmel G."/>
            <person name="Tummino P.J."/>
            <person name="Caruso A."/>
            <person name="Uria-Nickelsen M."/>
            <person name="Mills D.M."/>
            <person name="Ives C."/>
            <person name="Gibson R."/>
            <person name="Merberg D."/>
            <person name="Mills S.D."/>
            <person name="Jiang Q."/>
            <person name="Taylor D.E."/>
            <person name="Vovis G.F."/>
            <person name="Trust T.J."/>
        </authorList>
    </citation>
    <scope>NUCLEOTIDE SEQUENCE [LARGE SCALE GENOMIC DNA]</scope>
    <source>
        <strain>J99 / ATCC 700824</strain>
    </source>
</reference>
<proteinExistence type="inferred from homology"/>
<evidence type="ECO:0000250" key="1"/>
<evidence type="ECO:0000255" key="2">
    <source>
        <dbReference type="PROSITE-ProRule" id="PRU10014"/>
    </source>
</evidence>
<evidence type="ECO:0000305" key="3"/>
<name>RIR2_HELPJ</name>
<protein>
    <recommendedName>
        <fullName>Ribonucleoside-diphosphate reductase subunit beta</fullName>
        <ecNumber>1.17.4.1</ecNumber>
    </recommendedName>
    <alternativeName>
        <fullName>Ribonucleotide reductase small subunit</fullName>
    </alternativeName>
</protein>
<gene>
    <name type="primary">nrdB</name>
    <name type="ordered locus">jhp_1016</name>
</gene>
<accession>Q9ZKC3</accession>
<organism>
    <name type="scientific">Helicobacter pylori (strain J99 / ATCC 700824)</name>
    <name type="common">Campylobacter pylori J99</name>
    <dbReference type="NCBI Taxonomy" id="85963"/>
    <lineage>
        <taxon>Bacteria</taxon>
        <taxon>Pseudomonadati</taxon>
        <taxon>Campylobacterota</taxon>
        <taxon>Epsilonproteobacteria</taxon>
        <taxon>Campylobacterales</taxon>
        <taxon>Helicobacteraceae</taxon>
        <taxon>Helicobacter</taxon>
    </lineage>
</organism>
<comment type="function">
    <text evidence="1">Provides the precursors necessary for DNA synthesis. Catalyzes the biosynthesis of deoxyribonucleotides from the corresponding ribonucleotides (By similarity).</text>
</comment>
<comment type="catalytic activity">
    <reaction evidence="2">
        <text>a 2'-deoxyribonucleoside 5'-diphosphate + [thioredoxin]-disulfide + H2O = a ribonucleoside 5'-diphosphate + [thioredoxin]-dithiol</text>
        <dbReference type="Rhea" id="RHEA:23252"/>
        <dbReference type="Rhea" id="RHEA-COMP:10698"/>
        <dbReference type="Rhea" id="RHEA-COMP:10700"/>
        <dbReference type="ChEBI" id="CHEBI:15377"/>
        <dbReference type="ChEBI" id="CHEBI:29950"/>
        <dbReference type="ChEBI" id="CHEBI:50058"/>
        <dbReference type="ChEBI" id="CHEBI:57930"/>
        <dbReference type="ChEBI" id="CHEBI:73316"/>
        <dbReference type="EC" id="1.17.4.1"/>
    </reaction>
</comment>
<comment type="cofactor">
    <cofactor evidence="1">
        <name>Fe cation</name>
        <dbReference type="ChEBI" id="CHEBI:24875"/>
    </cofactor>
    <text evidence="1">Binds 2 iron ions per subunit.</text>
</comment>
<comment type="subunit">
    <text evidence="1">Tetramer of two alpha and two beta subunits.</text>
</comment>
<comment type="similarity">
    <text evidence="3">Belongs to the ribonucleoside diphosphate reductase small chain family.</text>
</comment>